<evidence type="ECO:0000250" key="1"/>
<evidence type="ECO:0000269" key="2">
    <source>
    </source>
</evidence>
<evidence type="ECO:0000269" key="3">
    <source>
    </source>
</evidence>
<evidence type="ECO:0000303" key="4">
    <source>
    </source>
</evidence>
<evidence type="ECO:0000305" key="5"/>
<evidence type="ECO:0000305" key="6">
    <source>
    </source>
</evidence>
<sequence>MKTQFAILMIAVVLMQMLVQTEGGILGKIWEGVKSLIGKRGLKKLDQLDDTFDSDLSDADVKLLREMFK</sequence>
<accession>C5J887</accession>
<reference key="1">
    <citation type="journal article" date="2009" name="Toxicon">
        <title>Cloning and characterization of cDNA sequences encoding for new venom peptides of the Brazilian scorpion Opisthacanthus cayaporum.</title>
        <authorList>
            <person name="Silva E.C."/>
            <person name="Camargos T.S."/>
            <person name="Maranhao A.Q."/>
            <person name="Silva-Pereira I."/>
            <person name="Silva L.P."/>
            <person name="Possani L.D."/>
            <person name="Schwartz E.F."/>
        </authorList>
    </citation>
    <scope>NUCLEOTIDE SEQUENCE [MRNA]</scope>
    <scope>PROTEIN SEQUENCE OF 24-35</scope>
    <scope>MASS SPECTROMETRY</scope>
    <scope>SUBCELLULAR LOCATION</scope>
    <scope>NOMENCLATURE</scope>
    <scope>PROBABLE AMIDATION AT LEU-37</scope>
    <source>
        <tissue>Venom</tissue>
        <tissue>Venom gland</tissue>
    </source>
</reference>
<reference key="2">
    <citation type="journal article" date="2016" name="Front. Microbiol.">
        <title>Activity of scorpion venom-derived antifungal peptides against planktonic cells of Candida spp. and Cryptococcus neoformans and Candida albicans biofilms.</title>
        <authorList>
            <person name="Guilhelmelli F."/>
            <person name="Vilela N."/>
            <person name="Smidt K.S."/>
            <person name="de Oliveira M.A."/>
            <person name="da Cunha Morales Alvares A."/>
            <person name="Rigonatto M.C."/>
            <person name="da Silva Costa P.H."/>
            <person name="Tavares A.H."/>
            <person name="de Freitas S.M."/>
            <person name="Nicola A.M."/>
            <person name="Franco O.L."/>
            <person name="Derengowski L.D."/>
            <person name="Schwartz E.F."/>
            <person name="Mortari M.R."/>
            <person name="Bocca A.L."/>
            <person name="Albuquerque P."/>
            <person name="Silva-Pereira I."/>
        </authorList>
    </citation>
    <scope>FUNCTION</scope>
    <scope>SYNTHESIS OF 27-37</scope>
</reference>
<proteinExistence type="evidence at protein level"/>
<feature type="signal peptide" evidence="2">
    <location>
        <begin position="1"/>
        <end position="23"/>
    </location>
</feature>
<feature type="peptide" id="PRO_5000471232" description="Amphipathic peptide OcyC2">
    <location>
        <begin position="24"/>
        <end position="37"/>
    </location>
</feature>
<feature type="peptide" id="PRO_5000471231" description="OcyC2f" evidence="2">
    <location>
        <begin position="24"/>
        <end position="35"/>
    </location>
</feature>
<feature type="propeptide" id="PRO_0000398605">
    <location>
        <begin position="41"/>
        <end position="69"/>
    </location>
</feature>
<feature type="modified residue" description="Isoleucine amide" evidence="6">
    <location>
        <position position="37"/>
    </location>
</feature>
<keyword id="KW-0027">Amidation</keyword>
<keyword id="KW-0929">Antimicrobial</keyword>
<keyword id="KW-0165">Cleavage on pair of basic residues</keyword>
<keyword id="KW-0903">Direct protein sequencing</keyword>
<keyword id="KW-0295">Fungicide</keyword>
<keyword id="KW-0472">Membrane</keyword>
<keyword id="KW-0964">Secreted</keyword>
<keyword id="KW-0732">Signal</keyword>
<keyword id="KW-1052">Target cell membrane</keyword>
<keyword id="KW-1053">Target membrane</keyword>
<dbReference type="EMBL" id="FM998744">
    <property type="protein sequence ID" value="CAX51391.1"/>
    <property type="molecule type" value="mRNA"/>
</dbReference>
<dbReference type="SMR" id="C5J887"/>
<dbReference type="GO" id="GO:0005576">
    <property type="term" value="C:extracellular region"/>
    <property type="evidence" value="ECO:0007669"/>
    <property type="project" value="UniProtKB-SubCell"/>
</dbReference>
<dbReference type="GO" id="GO:0016020">
    <property type="term" value="C:membrane"/>
    <property type="evidence" value="ECO:0007669"/>
    <property type="project" value="UniProtKB-KW"/>
</dbReference>
<dbReference type="GO" id="GO:0044218">
    <property type="term" value="C:other organism cell membrane"/>
    <property type="evidence" value="ECO:0007669"/>
    <property type="project" value="UniProtKB-KW"/>
</dbReference>
<dbReference type="GO" id="GO:0050832">
    <property type="term" value="P:defense response to fungus"/>
    <property type="evidence" value="ECO:0007669"/>
    <property type="project" value="UniProtKB-KW"/>
</dbReference>
<dbReference type="GO" id="GO:0031640">
    <property type="term" value="P:killing of cells of another organism"/>
    <property type="evidence" value="ECO:0007669"/>
    <property type="project" value="UniProtKB-KW"/>
</dbReference>
<organism>
    <name type="scientific">Opisthacanthus cayaporum</name>
    <name type="common">South American scorpion</name>
    <dbReference type="NCBI Taxonomy" id="573324"/>
    <lineage>
        <taxon>Eukaryota</taxon>
        <taxon>Metazoa</taxon>
        <taxon>Ecdysozoa</taxon>
        <taxon>Arthropoda</taxon>
        <taxon>Chelicerata</taxon>
        <taxon>Arachnida</taxon>
        <taxon>Scorpiones</taxon>
        <taxon>Iurida</taxon>
        <taxon>Scorpionoidea</taxon>
        <taxon>Hemiscorpiidae</taxon>
        <taxon>Opisthacanthus</taxon>
    </lineage>
</organism>
<name>NDB4T_OPICY</name>
<protein>
    <recommendedName>
        <fullName evidence="4">Amphipathic peptide OcyC2</fullName>
    </recommendedName>
    <alternativeName>
        <fullName evidence="4">Non-disulfide-bridged peptide 5.8</fullName>
        <shortName evidence="4">NDBP-5.8</shortName>
    </alternativeName>
    <component>
        <recommendedName>
            <fullName evidence="4">OcyC2f</fullName>
        </recommendedName>
    </component>
</protein>
<comment type="function">
    <text evidence="3">Amphipathic peptide with antimicrobial activity (PubMed:27917162). Shows antifungal activity with MIC values ranging from 25 to 200 uM (PubMed:27917162). Does not show antifungal activity against Candida glabrata (ATCC90030) and Candida parapsilosis (ATCC22019) (MIC&gt;400 uM) (PubMed:27917162).</text>
</comment>
<comment type="subcellular location">
    <subcellularLocation>
        <location evidence="2">Secreted</location>
    </subcellularLocation>
    <subcellularLocation>
        <location evidence="1">Target cell membrane</location>
    </subcellularLocation>
    <text evidence="1">Forms an alpha-helical membrane channel in the prey.</text>
</comment>
<comment type="tissue specificity">
    <text evidence="6">Expressed by the venom gland.</text>
</comment>
<comment type="mass spectrometry">
    <molecule>Amphipathic peptide OcyC2</molecule>
    <text>Monoisotopic mass.</text>
</comment>
<comment type="mass spectrometry">
    <molecule>OcyC2f</molecule>
    <text>Monoisotopic mass.</text>
</comment>
<comment type="similarity">
    <text evidence="5">Belongs to the non-disulfide-bridged peptide (NDBP) superfamily. Short antimicrobial peptide (group 4) family.</text>
</comment>